<gene>
    <name type="primary">POLA2</name>
</gene>
<evidence type="ECO:0000250" key="1">
    <source>
        <dbReference type="UniProtKB" id="P09884"/>
    </source>
</evidence>
<evidence type="ECO:0000250" key="2">
    <source>
        <dbReference type="UniProtKB" id="P20664"/>
    </source>
</evidence>
<evidence type="ECO:0000256" key="3">
    <source>
        <dbReference type="SAM" id="MobiDB-lite"/>
    </source>
</evidence>
<evidence type="ECO:0000269" key="4">
    <source>
    </source>
</evidence>
<evidence type="ECO:0000269" key="5">
    <source>
    </source>
</evidence>
<evidence type="ECO:0000303" key="6">
    <source>
    </source>
</evidence>
<evidence type="ECO:0000305" key="7"/>
<evidence type="ECO:0007744" key="8">
    <source>
    </source>
</evidence>
<evidence type="ECO:0007744" key="9">
    <source>
    </source>
</evidence>
<evidence type="ECO:0007744" key="10">
    <source>
    </source>
</evidence>
<evidence type="ECO:0007744" key="11">
    <source>
    </source>
</evidence>
<evidence type="ECO:0007744" key="12">
    <source>
    </source>
</evidence>
<evidence type="ECO:0007829" key="13">
    <source>
        <dbReference type="PDB" id="2KEB"/>
    </source>
</evidence>
<evidence type="ECO:0007829" key="14">
    <source>
        <dbReference type="PDB" id="4Y97"/>
    </source>
</evidence>
<evidence type="ECO:0007829" key="15">
    <source>
        <dbReference type="PDB" id="8D0B"/>
    </source>
</evidence>
<evidence type="ECO:0007829" key="16">
    <source>
        <dbReference type="PDB" id="8QJ7"/>
    </source>
</evidence>
<evidence type="ECO:0007829" key="17">
    <source>
        <dbReference type="PDB" id="8VY3"/>
    </source>
</evidence>
<evidence type="ECO:0007829" key="18">
    <source>
        <dbReference type="PDB" id="9C8V"/>
    </source>
</evidence>
<feature type="chain" id="PRO_0000194035" description="DNA polymerase alpha subunit B">
    <location>
        <begin position="1"/>
        <end position="598"/>
    </location>
</feature>
<feature type="region of interest" description="Disordered" evidence="3">
    <location>
        <begin position="112"/>
        <end position="167"/>
    </location>
</feature>
<feature type="compositionally biased region" description="Polar residues" evidence="3">
    <location>
        <begin position="112"/>
        <end position="140"/>
    </location>
</feature>
<feature type="compositionally biased region" description="Low complexity" evidence="3">
    <location>
        <begin position="141"/>
        <end position="158"/>
    </location>
</feature>
<feature type="modified residue" description="Phosphoserine" evidence="8">
    <location>
        <position position="126"/>
    </location>
</feature>
<feature type="modified residue" description="Phosphothreonine" evidence="8 10 12">
    <location>
        <position position="127"/>
    </location>
</feature>
<feature type="modified residue" description="Phosphothreonine" evidence="8 10 12">
    <location>
        <position position="130"/>
    </location>
</feature>
<feature type="modified residue" description="Phosphoserine" evidence="8 9 10 11 12">
    <location>
        <position position="141"/>
    </location>
</feature>
<feature type="modified residue" description="Phosphoserine" evidence="8 10 12">
    <location>
        <position position="147"/>
    </location>
</feature>
<feature type="modified residue" description="Phosphoserine" evidence="9 10 11 12">
    <location>
        <position position="152"/>
    </location>
</feature>
<feature type="modified residue" description="Phosphoserine" evidence="12">
    <location>
        <position position="154"/>
    </location>
</feature>
<feature type="splice variant" id="VSP_056608" description="In isoform 2." evidence="6">
    <location>
        <begin position="1"/>
        <end position="208"/>
    </location>
</feature>
<feature type="splice variant" id="VSP_056609" description="In isoform 2." evidence="6">
    <original>DVLGCVCVNPGRLTKGQVGGTFARLYLRRPAADGAERQSPCIAVQVVRI</original>
    <variation>VGLNSAFSQKHQNPVFDFPF</variation>
    <location>
        <begin position="550"/>
        <end position="598"/>
    </location>
</feature>
<feature type="sequence variant" id="VAR_033896" description="In dbSNP:rs487989.">
    <original>G</original>
    <variation>R</variation>
    <location>
        <position position="583"/>
    </location>
</feature>
<feature type="sequence variant" id="VAR_033897" description="In dbSNP:rs7123885.">
    <original>S</original>
    <variation>N</variation>
    <location>
        <position position="588"/>
    </location>
</feature>
<feature type="sequence conflict" description="In Ref. 1; AAA16459." evidence="7" ref="1">
    <original>DA</original>
    <variation>ES</variation>
    <location>
        <begin position="383"/>
        <end position="384"/>
    </location>
</feature>
<feature type="helix" evidence="13">
    <location>
        <begin position="5"/>
        <end position="15"/>
    </location>
</feature>
<feature type="helix" evidence="13">
    <location>
        <begin position="21"/>
        <end position="34"/>
    </location>
</feature>
<feature type="helix" evidence="13">
    <location>
        <begin position="38"/>
        <end position="52"/>
    </location>
</feature>
<feature type="helix" evidence="13">
    <location>
        <begin position="59"/>
        <end position="68"/>
    </location>
</feature>
<feature type="helix" evidence="13">
    <location>
        <begin position="70"/>
        <end position="73"/>
    </location>
</feature>
<feature type="helix" evidence="15">
    <location>
        <begin position="148"/>
        <end position="151"/>
    </location>
</feature>
<feature type="helix" evidence="14">
    <location>
        <begin position="159"/>
        <end position="162"/>
    </location>
</feature>
<feature type="turn" evidence="16">
    <location>
        <begin position="165"/>
        <end position="168"/>
    </location>
</feature>
<feature type="strand" evidence="14">
    <location>
        <begin position="170"/>
        <end position="176"/>
    </location>
</feature>
<feature type="strand" evidence="14">
    <location>
        <begin position="178"/>
        <end position="180"/>
    </location>
</feature>
<feature type="strand" evidence="14">
    <location>
        <begin position="193"/>
        <end position="195"/>
    </location>
</feature>
<feature type="helix" evidence="17">
    <location>
        <begin position="199"/>
        <end position="201"/>
    </location>
</feature>
<feature type="helix" evidence="14">
    <location>
        <begin position="213"/>
        <end position="234"/>
    </location>
</feature>
<feature type="strand" evidence="16">
    <location>
        <begin position="247"/>
        <end position="249"/>
    </location>
</feature>
<feature type="strand" evidence="14">
    <location>
        <begin position="251"/>
        <end position="263"/>
    </location>
</feature>
<feature type="turn" evidence="14">
    <location>
        <begin position="267"/>
        <end position="269"/>
    </location>
</feature>
<feature type="strand" evidence="14">
    <location>
        <begin position="270"/>
        <end position="274"/>
    </location>
</feature>
<feature type="helix" evidence="14">
    <location>
        <begin position="276"/>
        <end position="279"/>
    </location>
</feature>
<feature type="strand" evidence="14">
    <location>
        <begin position="283"/>
        <end position="287"/>
    </location>
</feature>
<feature type="strand" evidence="14">
    <location>
        <begin position="292"/>
        <end position="296"/>
    </location>
</feature>
<feature type="strand" evidence="14">
    <location>
        <begin position="301"/>
        <end position="307"/>
    </location>
</feature>
<feature type="strand" evidence="14">
    <location>
        <begin position="309"/>
        <end position="312"/>
    </location>
</feature>
<feature type="strand" evidence="14">
    <location>
        <begin position="314"/>
        <end position="319"/>
    </location>
</feature>
<feature type="helix" evidence="14">
    <location>
        <begin position="333"/>
        <end position="336"/>
    </location>
</feature>
<feature type="strand" evidence="14">
    <location>
        <begin position="340"/>
        <end position="347"/>
    </location>
</feature>
<feature type="helix" evidence="14">
    <location>
        <begin position="358"/>
        <end position="370"/>
    </location>
</feature>
<feature type="strand" evidence="14">
    <location>
        <begin position="373"/>
        <end position="379"/>
    </location>
</feature>
<feature type="strand" evidence="14">
    <location>
        <begin position="381"/>
        <end position="383"/>
    </location>
</feature>
<feature type="helix" evidence="14">
    <location>
        <begin position="387"/>
        <end position="390"/>
    </location>
</feature>
<feature type="helix" evidence="14">
    <location>
        <begin position="398"/>
        <end position="412"/>
    </location>
</feature>
<feature type="helix" evidence="14">
    <location>
        <begin position="414"/>
        <end position="416"/>
    </location>
</feature>
<feature type="strand" evidence="14">
    <location>
        <begin position="419"/>
        <end position="423"/>
    </location>
</feature>
<feature type="strand" evidence="16">
    <location>
        <begin position="428"/>
        <end position="431"/>
    </location>
</feature>
<feature type="strand" evidence="14">
    <location>
        <begin position="434"/>
        <end position="437"/>
    </location>
</feature>
<feature type="helix" evidence="14">
    <location>
        <begin position="449"/>
        <end position="451"/>
    </location>
</feature>
<feature type="strand" evidence="14">
    <location>
        <begin position="453"/>
        <end position="455"/>
    </location>
</feature>
<feature type="strand" evidence="14">
    <location>
        <begin position="458"/>
        <end position="464"/>
    </location>
</feature>
<feature type="strand" evidence="14">
    <location>
        <begin position="467"/>
        <end position="471"/>
    </location>
</feature>
<feature type="helix" evidence="14">
    <location>
        <begin position="476"/>
        <end position="481"/>
    </location>
</feature>
<feature type="strand" evidence="14">
    <location>
        <begin position="485"/>
        <end position="488"/>
    </location>
</feature>
<feature type="strand" evidence="16">
    <location>
        <begin position="489"/>
        <end position="492"/>
    </location>
</feature>
<feature type="helix" evidence="14">
    <location>
        <begin position="494"/>
        <end position="505"/>
    </location>
</feature>
<feature type="strand" evidence="18">
    <location>
        <begin position="507"/>
        <end position="509"/>
    </location>
</feature>
<feature type="helix" evidence="14">
    <location>
        <begin position="522"/>
        <end position="528"/>
    </location>
</feature>
<feature type="strand" evidence="14">
    <location>
        <begin position="532"/>
        <end position="534"/>
    </location>
</feature>
<feature type="strand" evidence="14">
    <location>
        <begin position="536"/>
        <end position="539"/>
    </location>
</feature>
<feature type="strand" evidence="14">
    <location>
        <begin position="547"/>
        <end position="551"/>
    </location>
</feature>
<feature type="strand" evidence="14">
    <location>
        <begin position="554"/>
        <end position="558"/>
    </location>
</feature>
<feature type="strand" evidence="14">
    <location>
        <begin position="562"/>
        <end position="564"/>
    </location>
</feature>
<feature type="strand" evidence="14">
    <location>
        <begin position="570"/>
        <end position="576"/>
    </location>
</feature>
<feature type="strand" evidence="14">
    <location>
        <begin position="583"/>
        <end position="585"/>
    </location>
</feature>
<feature type="strand" evidence="14">
    <location>
        <begin position="589"/>
        <end position="597"/>
    </location>
</feature>
<organism>
    <name type="scientific">Homo sapiens</name>
    <name type="common">Human</name>
    <dbReference type="NCBI Taxonomy" id="9606"/>
    <lineage>
        <taxon>Eukaryota</taxon>
        <taxon>Metazoa</taxon>
        <taxon>Chordata</taxon>
        <taxon>Craniata</taxon>
        <taxon>Vertebrata</taxon>
        <taxon>Euteleostomi</taxon>
        <taxon>Mammalia</taxon>
        <taxon>Eutheria</taxon>
        <taxon>Euarchontoglires</taxon>
        <taxon>Primates</taxon>
        <taxon>Haplorrhini</taxon>
        <taxon>Catarrhini</taxon>
        <taxon>Hominidae</taxon>
        <taxon>Homo</taxon>
    </lineage>
</organism>
<protein>
    <recommendedName>
        <fullName>DNA polymerase alpha subunit B</fullName>
    </recommendedName>
    <alternativeName>
        <fullName>DNA polymerase alpha 70 kDa subunit</fullName>
    </alternativeName>
</protein>
<accession>Q14181</accession>
<accession>B4DNB4</accession>
<accession>Q9BPV3</accession>
<sequence>MSASAQQLAEELQIFGLDCEEALIEKLVELCVQYGQNEEGMVGELIAFCTSTHKVGLTSEILNSFEHEFLSKRLSKARHSTCKDSGHAGARDIVSIQELIEVEEEEEILLNSYTTPSKGSQKRAISTPETPLTKRSVSTRSPHQLLSPSSFSPSATPSQKYNSRSNRGEVVTSFGLAQGVSWSGRGGAGNISLKVLGCPEALTGSYKSMFQKLPDIREVLTCKIEELGSELKEHYKIEAFTPLLAPAQEPVTLLGQIGCDSNGKLNNKSVILEGDREHSSGAQIPVDLSELKEYSLFPGQVVIMEGINTTGRKLVATKLYEGVPLPFYQPTEEDADFEQSMVLVACGPYTTSDSITYDPLLDLIAVINHDRPDVCILFGPFLDAKHEQVENCLLTSPFEDIFKQCLRTIIEGTRSSGSHLVFVPSLRDVHHEPVYPQPPFSYSDLSREDKKQVQFVSEPCSLSINGVIFGLTSTDLLFHLGAEEISSSSGTSDRFSRILKHILTQRSYYPLYPPQEDMAIDYESFYVYAQLPVTPDVLIIPSELRYFVKDVLGCVCVNPGRLTKGQVGGTFARLYLRRPAADGAERQSPCIAVQVVRI</sequence>
<comment type="function">
    <text evidence="1 2 5">Accessory subunit of the DNA polymerase alpha complex (also known as the alpha DNA polymerase-primase complex) which plays an essential role in the initiation of DNA synthesis (PubMed:9705292). During the S phase of the cell cycle, the DNA polymerase alpha complex (composed of a catalytic subunit POLA1, an accessory subunit POLA2 and two primase subunits, the catalytic subunit PRIM1 and the regulatory subunit PRIM2) is recruited to DNA at the replicative forks via direct interactions with MCM10 and WDHD1 (By similarity). The primase subunit of the polymerase alpha complex initiates DNA synthesis by oligomerising short RNA primers on both leading and lagging strands (By similarity). These primers are initially extended by the polymerase alpha catalytic subunit and subsequently transferred to polymerase delta and polymerase epsilon for processive synthesis on the lagging and leading strand, respectively (By similarity).</text>
</comment>
<comment type="subunit">
    <text evidence="2 5">Component of the alpha DNA polymerase complex (also known as the alpha DNA polymerase-primase complex) consisting of four subunits: the catalytic subunit POLA1, the regulatory subunit POLA2, and primase complex subunits PRIM1 and PRIM2 respectively (PubMed:26975377, PubMed:9705292). Within the complex, POLA1 directly interacts with PRIM2/p58 (By similarity).</text>
</comment>
<comment type="interaction">
    <interactant intactId="EBI-712752">
        <id>Q14181</id>
    </interactant>
    <interactant intactId="EBI-718729">
        <id>P55212</id>
        <label>CASP6</label>
    </interactant>
    <organismsDiffer>false</organismsDiffer>
    <experiments>3</experiments>
</comment>
<comment type="interaction">
    <interactant intactId="EBI-712752">
        <id>Q14181</id>
    </interactant>
    <interactant intactId="EBI-25852368">
        <id>O75460-2</id>
        <label>ERN1</label>
    </interactant>
    <organismsDiffer>false</organismsDiffer>
    <experiments>3</experiments>
</comment>
<comment type="interaction">
    <interactant intactId="EBI-712752">
        <id>Q14181</id>
    </interactant>
    <interactant intactId="EBI-10226858">
        <id>Q0VDC6</id>
        <label>FKBP1A</label>
    </interactant>
    <organismsDiffer>false</organismsDiffer>
    <experiments>3</experiments>
</comment>
<comment type="interaction">
    <interactant intactId="EBI-712752">
        <id>Q14181</id>
    </interactant>
    <interactant intactId="EBI-356991">
        <id>P54652</id>
        <label>HSPA2</label>
    </interactant>
    <organismsDiffer>false</organismsDiffer>
    <experiments>3</experiments>
</comment>
<comment type="interaction">
    <interactant intactId="EBI-712752">
        <id>Q14181</id>
    </interactant>
    <interactant intactId="EBI-21591415">
        <id>P13473-2</id>
        <label>LAMP2</label>
    </interactant>
    <organismsDiffer>false</organismsDiffer>
    <experiments>3</experiments>
</comment>
<comment type="interaction">
    <interactant intactId="EBI-712752">
        <id>Q14181</id>
    </interactant>
    <interactant intactId="EBI-5280197">
        <id>O75400-2</id>
        <label>PRPF40A</label>
    </interactant>
    <organismsDiffer>false</organismsDiffer>
    <experiments>3</experiments>
</comment>
<comment type="interaction">
    <interactant intactId="EBI-712752">
        <id>Q14181</id>
    </interactant>
    <interactant intactId="EBI-286642">
        <id>P62826</id>
        <label>RAN</label>
    </interactant>
    <organismsDiffer>false</organismsDiffer>
    <experiments>3</experiments>
</comment>
<comment type="interaction">
    <interactant intactId="EBI-712752">
        <id>Q14181</id>
    </interactant>
    <interactant intactId="EBI-1053431">
        <id>P49591</id>
        <label>SARS1</label>
    </interactant>
    <organismsDiffer>false</organismsDiffer>
    <experiments>3</experiments>
</comment>
<comment type="interaction">
    <interactant intactId="EBI-712752">
        <id>Q14181</id>
    </interactant>
    <interactant intactId="EBI-2623095">
        <id>Q9Y371</id>
        <label>SH3GLB1</label>
    </interactant>
    <organismsDiffer>false</organismsDiffer>
    <experiments>3</experiments>
</comment>
<comment type="interaction">
    <interactant intactId="EBI-712752">
        <id>Q14181</id>
    </interactant>
    <interactant intactId="EBI-1054052">
        <id>P31948</id>
        <label>STIP1</label>
    </interactant>
    <organismsDiffer>false</organismsDiffer>
    <experiments>3</experiments>
</comment>
<comment type="interaction">
    <interactant intactId="EBI-712752">
        <id>Q14181</id>
    </interactant>
    <interactant intactId="EBI-25475847">
        <id>PRO_0000449619</id>
        <label>rep</label>
        <dbReference type="UniProtKB" id="P0DTD1"/>
    </interactant>
    <organismsDiffer>true</organismsDiffer>
    <experiments>5</experiments>
</comment>
<comment type="subcellular location">
    <subcellularLocation>
        <location>Nucleus</location>
    </subcellularLocation>
</comment>
<comment type="alternative products">
    <event type="alternative splicing"/>
    <isoform>
        <id>Q14181-1</id>
        <name>1</name>
        <sequence type="displayed"/>
    </isoform>
    <isoform>
        <id>Q14181-2</id>
        <name>2</name>
        <sequence type="described" ref="VSP_056608 VSP_056609"/>
    </isoform>
</comment>
<comment type="domain">
    <text>The N-terminal 240 amino acids are sufficient to mediate complex formation.</text>
</comment>
<comment type="PTM">
    <text evidence="4">Phosphorylated in a cell cycle-dependent manner, in G2/M phase.</text>
</comment>
<comment type="similarity">
    <text evidence="7">Belongs to the DNA polymerase alpha subunit B family.</text>
</comment>
<dbReference type="EMBL" id="L24559">
    <property type="protein sequence ID" value="AAA16459.1"/>
    <property type="molecule type" value="mRNA"/>
</dbReference>
<dbReference type="EMBL" id="AK297842">
    <property type="protein sequence ID" value="BAG60176.1"/>
    <property type="molecule type" value="mRNA"/>
</dbReference>
<dbReference type="EMBL" id="CR456737">
    <property type="protein sequence ID" value="CAG33018.1"/>
    <property type="molecule type" value="mRNA"/>
</dbReference>
<dbReference type="EMBL" id="AP000944">
    <property type="status" value="NOT_ANNOTATED_CDS"/>
    <property type="molecule type" value="Genomic_DNA"/>
</dbReference>
<dbReference type="EMBL" id="BC002990">
    <property type="protein sequence ID" value="AAH02990.1"/>
    <property type="molecule type" value="mRNA"/>
</dbReference>
<dbReference type="EMBL" id="BC001347">
    <property type="protein sequence ID" value="AAH01347.1"/>
    <property type="molecule type" value="mRNA"/>
</dbReference>
<dbReference type="CCDS" id="CCDS8098.1">
    <molecule id="Q14181-1"/>
</dbReference>
<dbReference type="PIR" id="S39621">
    <property type="entry name" value="S39621"/>
</dbReference>
<dbReference type="RefSeq" id="NP_002680.2">
    <molecule id="Q14181-1"/>
    <property type="nucleotide sequence ID" value="NM_002689.3"/>
</dbReference>
<dbReference type="PDB" id="2KEB">
    <property type="method" value="NMR"/>
    <property type="chains" value="A=1-78"/>
</dbReference>
<dbReference type="PDB" id="4E2I">
    <property type="method" value="X-ray"/>
    <property type="resolution" value="5.00 A"/>
    <property type="chains" value="1/2/3/4/5/6/7/8/9/U/W=1-78"/>
</dbReference>
<dbReference type="PDB" id="4Y97">
    <property type="method" value="X-ray"/>
    <property type="resolution" value="2.51 A"/>
    <property type="chains" value="A/C/E/G=1-598"/>
</dbReference>
<dbReference type="PDB" id="5EXR">
    <property type="method" value="X-ray"/>
    <property type="resolution" value="3.60 A"/>
    <property type="chains" value="D/H=2-598"/>
</dbReference>
<dbReference type="PDB" id="7OPL">
    <property type="method" value="EM"/>
    <property type="resolution" value="4.12 A"/>
    <property type="chains" value="B=149-598"/>
</dbReference>
<dbReference type="PDB" id="7U5C">
    <property type="method" value="EM"/>
    <property type="resolution" value="4.60 A"/>
    <property type="chains" value="D=1-598"/>
</dbReference>
<dbReference type="PDB" id="8B9D">
    <property type="method" value="EM"/>
    <property type="resolution" value="3.40 A"/>
    <property type="chains" value="A=1-598"/>
</dbReference>
<dbReference type="PDB" id="8D0B">
    <property type="method" value="EM"/>
    <property type="resolution" value="3.43 A"/>
    <property type="chains" value="G=143-598"/>
</dbReference>
<dbReference type="PDB" id="8D0K">
    <property type="method" value="EM"/>
    <property type="resolution" value="4.27 A"/>
    <property type="chains" value="G=2-598"/>
</dbReference>
<dbReference type="PDB" id="8D9D">
    <property type="method" value="EM"/>
    <property type="resolution" value="3.59 A"/>
    <property type="chains" value="D=155-598"/>
</dbReference>
<dbReference type="PDB" id="8QJ7">
    <property type="method" value="EM"/>
    <property type="resolution" value="3.07 A"/>
    <property type="chains" value="B=1-598"/>
</dbReference>
<dbReference type="PDB" id="8VY3">
    <property type="method" value="EM"/>
    <property type="resolution" value="2.98 A"/>
    <property type="chains" value="D=155-598"/>
</dbReference>
<dbReference type="PDB" id="9C8V">
    <property type="method" value="EM"/>
    <property type="resolution" value="3.39 A"/>
    <property type="chains" value="D=155-598"/>
</dbReference>
<dbReference type="PDBsum" id="2KEB"/>
<dbReference type="PDBsum" id="4E2I"/>
<dbReference type="PDBsum" id="4Y97"/>
<dbReference type="PDBsum" id="5EXR"/>
<dbReference type="PDBsum" id="7OPL"/>
<dbReference type="PDBsum" id="7U5C"/>
<dbReference type="PDBsum" id="8B9D"/>
<dbReference type="PDBsum" id="8D0B"/>
<dbReference type="PDBsum" id="8D0K"/>
<dbReference type="PDBsum" id="8D9D"/>
<dbReference type="PDBsum" id="8QJ7"/>
<dbReference type="PDBsum" id="8VY3"/>
<dbReference type="PDBsum" id="9C8V"/>
<dbReference type="BMRB" id="Q14181"/>
<dbReference type="EMDB" id="EMD-13020"/>
<dbReference type="EMDB" id="EMD-26346"/>
<dbReference type="EMDB" id="EMD-26347"/>
<dbReference type="EMDB" id="EMD-27104"/>
<dbReference type="EMDB" id="EMD-27107"/>
<dbReference type="EMDB" id="EMD-27258"/>
<dbReference type="EMDB" id="EMD-42033"/>
<dbReference type="EMDB" id="EMD-42034"/>
<dbReference type="EMDB" id="EMD-42035"/>
<dbReference type="EMDB" id="EMD-42036"/>
<dbReference type="EMDB" id="EMD-42037"/>
<dbReference type="SASBDB" id="Q14181"/>
<dbReference type="SMR" id="Q14181"/>
<dbReference type="BioGRID" id="117176">
    <property type="interactions" value="139"/>
</dbReference>
<dbReference type="ComplexPortal" id="CPX-2087">
    <property type="entry name" value="DNA polymerase alpha:primase complex"/>
</dbReference>
<dbReference type="CORUM" id="Q14181"/>
<dbReference type="FunCoup" id="Q14181">
    <property type="interactions" value="2067"/>
</dbReference>
<dbReference type="IntAct" id="Q14181">
    <property type="interactions" value="80"/>
</dbReference>
<dbReference type="MINT" id="Q14181"/>
<dbReference type="STRING" id="9606.ENSP00000265465"/>
<dbReference type="ChEMBL" id="CHEMBL2363042"/>
<dbReference type="DrugBank" id="DB00851">
    <property type="generic name" value="Dacarbazine"/>
</dbReference>
<dbReference type="DrugCentral" id="Q14181"/>
<dbReference type="GlyGen" id="Q14181">
    <property type="glycosylation" value="2 sites, 1 O-linked glycan (1 site)"/>
</dbReference>
<dbReference type="iPTMnet" id="Q14181"/>
<dbReference type="PhosphoSitePlus" id="Q14181"/>
<dbReference type="SwissPalm" id="Q14181"/>
<dbReference type="BioMuta" id="POLA2"/>
<dbReference type="DMDM" id="90110415"/>
<dbReference type="jPOST" id="Q14181"/>
<dbReference type="MassIVE" id="Q14181"/>
<dbReference type="PaxDb" id="9606-ENSP00000265465"/>
<dbReference type="PeptideAtlas" id="Q14181"/>
<dbReference type="ProteomicsDB" id="4684"/>
<dbReference type="ProteomicsDB" id="59900">
    <molecule id="Q14181-1"/>
</dbReference>
<dbReference type="Pumba" id="Q14181"/>
<dbReference type="Antibodypedia" id="29737">
    <property type="antibodies" value="293 antibodies from 28 providers"/>
</dbReference>
<dbReference type="DNASU" id="23649"/>
<dbReference type="Ensembl" id="ENST00000265465.8">
    <molecule id="Q14181-1"/>
    <property type="protein sequence ID" value="ENSP00000265465.3"/>
    <property type="gene ID" value="ENSG00000014138.10"/>
</dbReference>
<dbReference type="GeneID" id="23649"/>
<dbReference type="KEGG" id="hsa:23649"/>
<dbReference type="MANE-Select" id="ENST00000265465.8">
    <property type="protein sequence ID" value="ENSP00000265465.3"/>
    <property type="RefSeq nucleotide sequence ID" value="NM_002689.4"/>
    <property type="RefSeq protein sequence ID" value="NP_002680.2"/>
</dbReference>
<dbReference type="UCSC" id="uc001odj.4">
    <molecule id="Q14181-1"/>
    <property type="organism name" value="human"/>
</dbReference>
<dbReference type="AGR" id="HGNC:30073"/>
<dbReference type="CTD" id="23649"/>
<dbReference type="DisGeNET" id="23649"/>
<dbReference type="GeneCards" id="POLA2"/>
<dbReference type="HGNC" id="HGNC:30073">
    <property type="gene designation" value="POLA2"/>
</dbReference>
<dbReference type="HPA" id="ENSG00000014138">
    <property type="expression patterns" value="Low tissue specificity"/>
</dbReference>
<dbReference type="MIM" id="620063">
    <property type="type" value="gene"/>
</dbReference>
<dbReference type="neXtProt" id="NX_Q14181"/>
<dbReference type="OpenTargets" id="ENSG00000014138"/>
<dbReference type="PharmGKB" id="PA411"/>
<dbReference type="VEuPathDB" id="HostDB:ENSG00000014138"/>
<dbReference type="eggNOG" id="KOG1625">
    <property type="taxonomic scope" value="Eukaryota"/>
</dbReference>
<dbReference type="GeneTree" id="ENSGT00390000016784"/>
<dbReference type="HOGENOM" id="CLU_014923_3_1_1"/>
<dbReference type="InParanoid" id="Q14181"/>
<dbReference type="OMA" id="PFLDIEH"/>
<dbReference type="OrthoDB" id="336885at2759"/>
<dbReference type="PAN-GO" id="Q14181">
    <property type="GO annotations" value="2 GO annotations based on evolutionary models"/>
</dbReference>
<dbReference type="PhylomeDB" id="Q14181"/>
<dbReference type="TreeFam" id="TF314249"/>
<dbReference type="PathwayCommons" id="Q14181"/>
<dbReference type="Reactome" id="R-HSA-113501">
    <property type="pathway name" value="Inhibition of replication initiation of damaged DNA by RB1/E2F1"/>
</dbReference>
<dbReference type="Reactome" id="R-HSA-174411">
    <property type="pathway name" value="Polymerase switching on the C-strand of the telomere"/>
</dbReference>
<dbReference type="Reactome" id="R-HSA-174430">
    <property type="pathway name" value="Telomere C-strand synthesis initiation"/>
</dbReference>
<dbReference type="Reactome" id="R-HSA-68952">
    <property type="pathway name" value="DNA replication initiation"/>
</dbReference>
<dbReference type="Reactome" id="R-HSA-68962">
    <property type="pathway name" value="Activation of the pre-replicative complex"/>
</dbReference>
<dbReference type="Reactome" id="R-HSA-69091">
    <property type="pathway name" value="Polymerase switching"/>
</dbReference>
<dbReference type="Reactome" id="R-HSA-69166">
    <property type="pathway name" value="Removal of the Flap Intermediate"/>
</dbReference>
<dbReference type="Reactome" id="R-HSA-69183">
    <property type="pathway name" value="Processive synthesis on the lagging strand"/>
</dbReference>
<dbReference type="Reactome" id="R-HSA-9710421">
    <property type="pathway name" value="Defective pyroptosis"/>
</dbReference>
<dbReference type="SignaLink" id="Q14181"/>
<dbReference type="SIGNOR" id="Q14181"/>
<dbReference type="BioGRID-ORCS" id="23649">
    <property type="hits" value="760 hits in 1161 CRISPR screens"/>
</dbReference>
<dbReference type="ChiTaRS" id="POLA2">
    <property type="organism name" value="human"/>
</dbReference>
<dbReference type="EvolutionaryTrace" id="Q14181"/>
<dbReference type="GeneWiki" id="POLA2"/>
<dbReference type="GenomeRNAi" id="23649"/>
<dbReference type="Pharos" id="Q14181">
    <property type="development level" value="Tbio"/>
</dbReference>
<dbReference type="PRO" id="PR:Q14181"/>
<dbReference type="Proteomes" id="UP000005640">
    <property type="component" value="Chromosome 11"/>
</dbReference>
<dbReference type="RNAct" id="Q14181">
    <property type="molecule type" value="protein"/>
</dbReference>
<dbReference type="Bgee" id="ENSG00000014138">
    <property type="expression patterns" value="Expressed in ventricular zone and 132 other cell types or tissues"/>
</dbReference>
<dbReference type="ExpressionAtlas" id="Q14181">
    <property type="expression patterns" value="baseline and differential"/>
</dbReference>
<dbReference type="GO" id="GO:0005658">
    <property type="term" value="C:alpha DNA polymerase:primase complex"/>
    <property type="evidence" value="ECO:0000314"/>
    <property type="project" value="UniProtKB"/>
</dbReference>
<dbReference type="GO" id="GO:0036064">
    <property type="term" value="C:ciliary basal body"/>
    <property type="evidence" value="ECO:0000314"/>
    <property type="project" value="HPA"/>
</dbReference>
<dbReference type="GO" id="GO:0005829">
    <property type="term" value="C:cytosol"/>
    <property type="evidence" value="ECO:0000314"/>
    <property type="project" value="HPA"/>
</dbReference>
<dbReference type="GO" id="GO:0043231">
    <property type="term" value="C:intracellular membrane-bounded organelle"/>
    <property type="evidence" value="ECO:0000314"/>
    <property type="project" value="HPA"/>
</dbReference>
<dbReference type="GO" id="GO:0005654">
    <property type="term" value="C:nucleoplasm"/>
    <property type="evidence" value="ECO:0000314"/>
    <property type="project" value="HPA"/>
</dbReference>
<dbReference type="GO" id="GO:0003677">
    <property type="term" value="F:DNA binding"/>
    <property type="evidence" value="ECO:0007669"/>
    <property type="project" value="InterPro"/>
</dbReference>
<dbReference type="GO" id="GO:0006260">
    <property type="term" value="P:DNA replication"/>
    <property type="evidence" value="ECO:0000303"/>
    <property type="project" value="UniProtKB"/>
</dbReference>
<dbReference type="GO" id="GO:0006270">
    <property type="term" value="P:DNA replication initiation"/>
    <property type="evidence" value="ECO:0000314"/>
    <property type="project" value="ComplexPortal"/>
</dbReference>
<dbReference type="GO" id="GO:0006269">
    <property type="term" value="P:DNA replication, synthesis of primer"/>
    <property type="evidence" value="ECO:0000314"/>
    <property type="project" value="UniProtKB"/>
</dbReference>
<dbReference type="GO" id="GO:0006606">
    <property type="term" value="P:protein import into nucleus"/>
    <property type="evidence" value="ECO:0007669"/>
    <property type="project" value="Ensembl"/>
</dbReference>
<dbReference type="DisProt" id="DP02759"/>
<dbReference type="FunFam" id="1.10.8.530:FF:000001">
    <property type="entry name" value="DNA polymerase alpha subunit B"/>
    <property type="match status" value="1"/>
</dbReference>
<dbReference type="FunFam" id="3.60.21.60:FF:000002">
    <property type="entry name" value="DNA polymerase alpha subunit B"/>
    <property type="match status" value="1"/>
</dbReference>
<dbReference type="FunFam" id="3.60.21.60:FF:000003">
    <property type="entry name" value="DNA polymerase alpha subunit B"/>
    <property type="match status" value="1"/>
</dbReference>
<dbReference type="Gene3D" id="3.60.21.60">
    <property type="match status" value="2"/>
</dbReference>
<dbReference type="Gene3D" id="1.10.8.530">
    <property type="entry name" value="DNA polymerase alpha-primase, subunit B, N-terminal domain"/>
    <property type="match status" value="1"/>
</dbReference>
<dbReference type="InterPro" id="IPR007185">
    <property type="entry name" value="DNA_pol_a/d/e_bsu"/>
</dbReference>
<dbReference type="InterPro" id="IPR043034">
    <property type="entry name" value="DNA_pol_alpha_B_N_sf"/>
</dbReference>
<dbReference type="InterPro" id="IPR016722">
    <property type="entry name" value="DNA_pol_alpha_bsu"/>
</dbReference>
<dbReference type="InterPro" id="IPR054300">
    <property type="entry name" value="DPOA2_OB"/>
</dbReference>
<dbReference type="InterPro" id="IPR013627">
    <property type="entry name" value="Pol_alpha_B_N"/>
</dbReference>
<dbReference type="PANTHER" id="PTHR23061">
    <property type="entry name" value="DNA POLYMERASE 2 ALPHA 70 KDA SUBUNIT"/>
    <property type="match status" value="1"/>
</dbReference>
<dbReference type="PANTHER" id="PTHR23061:SF12">
    <property type="entry name" value="DNA POLYMERASE ALPHA SUBUNIT B"/>
    <property type="match status" value="1"/>
</dbReference>
<dbReference type="Pfam" id="PF04042">
    <property type="entry name" value="DNA_pol_E_B"/>
    <property type="match status" value="1"/>
</dbReference>
<dbReference type="Pfam" id="PF22062">
    <property type="entry name" value="DPOA2_OB"/>
    <property type="match status" value="1"/>
</dbReference>
<dbReference type="Pfam" id="PF08418">
    <property type="entry name" value="Pol_alpha_B_N"/>
    <property type="match status" value="1"/>
</dbReference>
<dbReference type="PIRSF" id="PIRSF018300">
    <property type="entry name" value="DNA_pol_alph_2"/>
    <property type="match status" value="1"/>
</dbReference>
<proteinExistence type="evidence at protein level"/>
<reference key="1">
    <citation type="journal article" date="1993" name="EMBO J.">
        <title>The role of the 70 kDa subunit of human DNA polymerase alpha in DNA replication.</title>
        <authorList>
            <person name="Collins K.L."/>
            <person name="Russo A.A.R."/>
            <person name="Tseng B.Y."/>
            <person name="Kelly T.J."/>
        </authorList>
    </citation>
    <scope>NUCLEOTIDE SEQUENCE [MRNA] (ISOFORM 1)</scope>
    <source>
        <tissue>Cervix epithelium</tissue>
    </source>
</reference>
<reference key="2">
    <citation type="journal article" date="2004" name="Nat. Genet.">
        <title>Complete sequencing and characterization of 21,243 full-length human cDNAs.</title>
        <authorList>
            <person name="Ota T."/>
            <person name="Suzuki Y."/>
            <person name="Nishikawa T."/>
            <person name="Otsuki T."/>
            <person name="Sugiyama T."/>
            <person name="Irie R."/>
            <person name="Wakamatsu A."/>
            <person name="Hayashi K."/>
            <person name="Sato H."/>
            <person name="Nagai K."/>
            <person name="Kimura K."/>
            <person name="Makita H."/>
            <person name="Sekine M."/>
            <person name="Obayashi M."/>
            <person name="Nishi T."/>
            <person name="Shibahara T."/>
            <person name="Tanaka T."/>
            <person name="Ishii S."/>
            <person name="Yamamoto J."/>
            <person name="Saito K."/>
            <person name="Kawai Y."/>
            <person name="Isono Y."/>
            <person name="Nakamura Y."/>
            <person name="Nagahari K."/>
            <person name="Murakami K."/>
            <person name="Yasuda T."/>
            <person name="Iwayanagi T."/>
            <person name="Wagatsuma M."/>
            <person name="Shiratori A."/>
            <person name="Sudo H."/>
            <person name="Hosoiri T."/>
            <person name="Kaku Y."/>
            <person name="Kodaira H."/>
            <person name="Kondo H."/>
            <person name="Sugawara M."/>
            <person name="Takahashi M."/>
            <person name="Kanda K."/>
            <person name="Yokoi T."/>
            <person name="Furuya T."/>
            <person name="Kikkawa E."/>
            <person name="Omura Y."/>
            <person name="Abe K."/>
            <person name="Kamihara K."/>
            <person name="Katsuta N."/>
            <person name="Sato K."/>
            <person name="Tanikawa M."/>
            <person name="Yamazaki M."/>
            <person name="Ninomiya K."/>
            <person name="Ishibashi T."/>
            <person name="Yamashita H."/>
            <person name="Murakawa K."/>
            <person name="Fujimori K."/>
            <person name="Tanai H."/>
            <person name="Kimata M."/>
            <person name="Watanabe M."/>
            <person name="Hiraoka S."/>
            <person name="Chiba Y."/>
            <person name="Ishida S."/>
            <person name="Ono Y."/>
            <person name="Takiguchi S."/>
            <person name="Watanabe S."/>
            <person name="Yosida M."/>
            <person name="Hotuta T."/>
            <person name="Kusano J."/>
            <person name="Kanehori K."/>
            <person name="Takahashi-Fujii A."/>
            <person name="Hara H."/>
            <person name="Tanase T.-O."/>
            <person name="Nomura Y."/>
            <person name="Togiya S."/>
            <person name="Komai F."/>
            <person name="Hara R."/>
            <person name="Takeuchi K."/>
            <person name="Arita M."/>
            <person name="Imose N."/>
            <person name="Musashino K."/>
            <person name="Yuuki H."/>
            <person name="Oshima A."/>
            <person name="Sasaki N."/>
            <person name="Aotsuka S."/>
            <person name="Yoshikawa Y."/>
            <person name="Matsunawa H."/>
            <person name="Ichihara T."/>
            <person name="Shiohata N."/>
            <person name="Sano S."/>
            <person name="Moriya S."/>
            <person name="Momiyama H."/>
            <person name="Satoh N."/>
            <person name="Takami S."/>
            <person name="Terashima Y."/>
            <person name="Suzuki O."/>
            <person name="Nakagawa S."/>
            <person name="Senoh A."/>
            <person name="Mizoguchi H."/>
            <person name="Goto Y."/>
            <person name="Shimizu F."/>
            <person name="Wakebe H."/>
            <person name="Hishigaki H."/>
            <person name="Watanabe T."/>
            <person name="Sugiyama A."/>
            <person name="Takemoto M."/>
            <person name="Kawakami B."/>
            <person name="Yamazaki M."/>
            <person name="Watanabe K."/>
            <person name="Kumagai A."/>
            <person name="Itakura S."/>
            <person name="Fukuzumi Y."/>
            <person name="Fujimori Y."/>
            <person name="Komiyama M."/>
            <person name="Tashiro H."/>
            <person name="Tanigami A."/>
            <person name="Fujiwara T."/>
            <person name="Ono T."/>
            <person name="Yamada K."/>
            <person name="Fujii Y."/>
            <person name="Ozaki K."/>
            <person name="Hirao M."/>
            <person name="Ohmori Y."/>
            <person name="Kawabata A."/>
            <person name="Hikiji T."/>
            <person name="Kobatake N."/>
            <person name="Inagaki H."/>
            <person name="Ikema Y."/>
            <person name="Okamoto S."/>
            <person name="Okitani R."/>
            <person name="Kawakami T."/>
            <person name="Noguchi S."/>
            <person name="Itoh T."/>
            <person name="Shigeta K."/>
            <person name="Senba T."/>
            <person name="Matsumura K."/>
            <person name="Nakajima Y."/>
            <person name="Mizuno T."/>
            <person name="Morinaga M."/>
            <person name="Sasaki M."/>
            <person name="Togashi T."/>
            <person name="Oyama M."/>
            <person name="Hata H."/>
            <person name="Watanabe M."/>
            <person name="Komatsu T."/>
            <person name="Mizushima-Sugano J."/>
            <person name="Satoh T."/>
            <person name="Shirai Y."/>
            <person name="Takahashi Y."/>
            <person name="Nakagawa K."/>
            <person name="Okumura K."/>
            <person name="Nagase T."/>
            <person name="Nomura N."/>
            <person name="Kikuchi H."/>
            <person name="Masuho Y."/>
            <person name="Yamashita R."/>
            <person name="Nakai K."/>
            <person name="Yada T."/>
            <person name="Nakamura Y."/>
            <person name="Ohara O."/>
            <person name="Isogai T."/>
            <person name="Sugano S."/>
        </authorList>
    </citation>
    <scope>NUCLEOTIDE SEQUENCE [LARGE SCALE MRNA] (ISOFORM 2)</scope>
    <source>
        <tissue>Heart</tissue>
    </source>
</reference>
<reference key="3">
    <citation type="submission" date="2004-06" db="EMBL/GenBank/DDBJ databases">
        <title>Cloning of human full open reading frames in Gateway(TM) system entry vector (pDONR201).</title>
        <authorList>
            <person name="Ebert L."/>
            <person name="Schick M."/>
            <person name="Neubert P."/>
            <person name="Schatten R."/>
            <person name="Henze S."/>
            <person name="Korn B."/>
        </authorList>
    </citation>
    <scope>NUCLEOTIDE SEQUENCE [LARGE SCALE MRNA] (ISOFORM 1)</scope>
</reference>
<reference key="4">
    <citation type="journal article" date="2006" name="Nature">
        <title>Human chromosome 11 DNA sequence and analysis including novel gene identification.</title>
        <authorList>
            <person name="Taylor T.D."/>
            <person name="Noguchi H."/>
            <person name="Totoki Y."/>
            <person name="Toyoda A."/>
            <person name="Kuroki Y."/>
            <person name="Dewar K."/>
            <person name="Lloyd C."/>
            <person name="Itoh T."/>
            <person name="Takeda T."/>
            <person name="Kim D.-W."/>
            <person name="She X."/>
            <person name="Barlow K.F."/>
            <person name="Bloom T."/>
            <person name="Bruford E."/>
            <person name="Chang J.L."/>
            <person name="Cuomo C.A."/>
            <person name="Eichler E."/>
            <person name="FitzGerald M.G."/>
            <person name="Jaffe D.B."/>
            <person name="LaButti K."/>
            <person name="Nicol R."/>
            <person name="Park H.-S."/>
            <person name="Seaman C."/>
            <person name="Sougnez C."/>
            <person name="Yang X."/>
            <person name="Zimmer A.R."/>
            <person name="Zody M.C."/>
            <person name="Birren B.W."/>
            <person name="Nusbaum C."/>
            <person name="Fujiyama A."/>
            <person name="Hattori M."/>
            <person name="Rogers J."/>
            <person name="Lander E.S."/>
            <person name="Sakaki Y."/>
        </authorList>
    </citation>
    <scope>NUCLEOTIDE SEQUENCE [LARGE SCALE GENOMIC DNA]</scope>
</reference>
<reference key="5">
    <citation type="journal article" date="2004" name="Genome Res.">
        <title>The status, quality, and expansion of the NIH full-length cDNA project: the Mammalian Gene Collection (MGC).</title>
        <authorList>
            <consortium name="The MGC Project Team"/>
        </authorList>
    </citation>
    <scope>NUCLEOTIDE SEQUENCE [LARGE SCALE MRNA] (ISOFORM 1)</scope>
    <source>
        <tissue>Lung</tissue>
    </source>
</reference>
<reference key="6">
    <citation type="journal article" date="1991" name="J. Biol. Chem.">
        <title>Cell cycle-dependent phosphorylation of human DNA polymerase alpha.</title>
        <authorList>
            <person name="Nasheuer H.-P."/>
            <person name="Moore A."/>
            <person name="Wahl A.F."/>
            <person name="Wang T.S.-F."/>
        </authorList>
    </citation>
    <scope>PHOSPHORYLATION</scope>
</reference>
<reference key="7">
    <citation type="journal article" date="1998" name="J. Biol. Chem.">
        <title>Primase activity of human DNA polymerase alpha-primase. Divalent cations stabilize the enzyme activity of the p48 subunit.</title>
        <authorList>
            <person name="Schneider A."/>
            <person name="Smith R.W."/>
            <person name="Kautz A.R."/>
            <person name="Weisshart K."/>
            <person name="Grosse F."/>
            <person name="Nasheuer H.P."/>
        </authorList>
    </citation>
    <scope>FUNCTION</scope>
    <scope>IDENTIFICATION IN THE DNA POLYMERASE ALPHA COMPLEX</scope>
</reference>
<reference key="8">
    <citation type="journal article" date="2008" name="Proc. Natl. Acad. Sci. U.S.A.">
        <title>A quantitative atlas of mitotic phosphorylation.</title>
        <authorList>
            <person name="Dephoure N."/>
            <person name="Zhou C."/>
            <person name="Villen J."/>
            <person name="Beausoleil S.A."/>
            <person name="Bakalarski C.E."/>
            <person name="Elledge S.J."/>
            <person name="Gygi S.P."/>
        </authorList>
    </citation>
    <scope>PHOSPHORYLATION [LARGE SCALE ANALYSIS] AT SER-126; THR-127; THR-130; SER-141 AND SER-147</scope>
    <scope>IDENTIFICATION BY MASS SPECTROMETRY [LARGE SCALE ANALYSIS]</scope>
    <source>
        <tissue>Cervix carcinoma</tissue>
    </source>
</reference>
<reference key="9">
    <citation type="journal article" date="2009" name="Anal. Chem.">
        <title>Lys-N and trypsin cover complementary parts of the phosphoproteome in a refined SCX-based approach.</title>
        <authorList>
            <person name="Gauci S."/>
            <person name="Helbig A.O."/>
            <person name="Slijper M."/>
            <person name="Krijgsveld J."/>
            <person name="Heck A.J."/>
            <person name="Mohammed S."/>
        </authorList>
    </citation>
    <scope>IDENTIFICATION BY MASS SPECTROMETRY [LARGE SCALE ANALYSIS]</scope>
</reference>
<reference key="10">
    <citation type="journal article" date="2009" name="Sci. Signal.">
        <title>Quantitative phosphoproteomic analysis of T cell receptor signaling reveals system-wide modulation of protein-protein interactions.</title>
        <authorList>
            <person name="Mayya V."/>
            <person name="Lundgren D.H."/>
            <person name="Hwang S.-I."/>
            <person name="Rezaul K."/>
            <person name="Wu L."/>
            <person name="Eng J.K."/>
            <person name="Rodionov V."/>
            <person name="Han D.K."/>
        </authorList>
    </citation>
    <scope>PHOSPHORYLATION [LARGE SCALE ANALYSIS] AT SER-141 AND SER-152</scope>
    <scope>IDENTIFICATION BY MASS SPECTROMETRY [LARGE SCALE ANALYSIS]</scope>
    <source>
        <tissue>Leukemic T-cell</tissue>
    </source>
</reference>
<reference key="11">
    <citation type="journal article" date="2010" name="Sci. Signal.">
        <title>Quantitative phosphoproteomics reveals widespread full phosphorylation site occupancy during mitosis.</title>
        <authorList>
            <person name="Olsen J.V."/>
            <person name="Vermeulen M."/>
            <person name="Santamaria A."/>
            <person name="Kumar C."/>
            <person name="Miller M.L."/>
            <person name="Jensen L.J."/>
            <person name="Gnad F."/>
            <person name="Cox J."/>
            <person name="Jensen T.S."/>
            <person name="Nigg E.A."/>
            <person name="Brunak S."/>
            <person name="Mann M."/>
        </authorList>
    </citation>
    <scope>PHOSPHORYLATION [LARGE SCALE ANALYSIS] AT THR-127; THR-130; SER-141; SER-147 AND SER-152</scope>
    <scope>IDENTIFICATION BY MASS SPECTROMETRY [LARGE SCALE ANALYSIS]</scope>
    <source>
        <tissue>Cervix carcinoma</tissue>
    </source>
</reference>
<reference key="12">
    <citation type="journal article" date="2011" name="BMC Syst. Biol.">
        <title>Initial characterization of the human central proteome.</title>
        <authorList>
            <person name="Burkard T.R."/>
            <person name="Planyavsky M."/>
            <person name="Kaupe I."/>
            <person name="Breitwieser F.P."/>
            <person name="Buerckstuemmer T."/>
            <person name="Bennett K.L."/>
            <person name="Superti-Furga G."/>
            <person name="Colinge J."/>
        </authorList>
    </citation>
    <scope>IDENTIFICATION BY MASS SPECTROMETRY [LARGE SCALE ANALYSIS]</scope>
</reference>
<reference key="13">
    <citation type="journal article" date="2011" name="Sci. Signal.">
        <title>System-wide temporal characterization of the proteome and phosphoproteome of human embryonic stem cell differentiation.</title>
        <authorList>
            <person name="Rigbolt K.T."/>
            <person name="Prokhorova T.A."/>
            <person name="Akimov V."/>
            <person name="Henningsen J."/>
            <person name="Johansen P.T."/>
            <person name="Kratchmarova I."/>
            <person name="Kassem M."/>
            <person name="Mann M."/>
            <person name="Olsen J.V."/>
            <person name="Blagoev B."/>
        </authorList>
    </citation>
    <scope>PHOSPHORYLATION [LARGE SCALE ANALYSIS] AT SER-141 AND SER-152</scope>
    <scope>IDENTIFICATION BY MASS SPECTROMETRY [LARGE SCALE ANALYSIS]</scope>
</reference>
<reference key="14">
    <citation type="journal article" date="2013" name="J. Proteome Res.">
        <title>Toward a comprehensive characterization of a human cancer cell phosphoproteome.</title>
        <authorList>
            <person name="Zhou H."/>
            <person name="Di Palma S."/>
            <person name="Preisinger C."/>
            <person name="Peng M."/>
            <person name="Polat A.N."/>
            <person name="Heck A.J."/>
            <person name="Mohammed S."/>
        </authorList>
    </citation>
    <scope>PHOSPHORYLATION [LARGE SCALE ANALYSIS] AT THR-127; THR-130; SER-141; SER-147; SER-152 AND SER-154</scope>
    <scope>IDENTIFICATION BY MASS SPECTROMETRY [LARGE SCALE ANALYSIS]</scope>
    <source>
        <tissue>Cervix carcinoma</tissue>
        <tissue>Erythroleukemia</tissue>
    </source>
</reference>
<reference key="15">
    <citation type="journal article" date="2016" name="J. Biol. Chem.">
        <title>Mechanism of Concerted RNA-DNA Primer Synthesis by the Human Primosome.</title>
        <authorList>
            <person name="Baranovskiy A.G."/>
            <person name="Babayeva N.D."/>
            <person name="Zhang Y."/>
            <person name="Gu J."/>
            <person name="Suwa Y."/>
            <person name="Pavlov Y.I."/>
            <person name="Tahirov T.H."/>
        </authorList>
    </citation>
    <scope>X-RAY CRYSTALLOGRAPHY (3.60 ANGSTROMS) OF 2-598</scope>
    <scope>SUBUNIT</scope>
</reference>
<keyword id="KW-0002">3D-structure</keyword>
<keyword id="KW-0025">Alternative splicing</keyword>
<keyword id="KW-0235">DNA replication</keyword>
<keyword id="KW-0539">Nucleus</keyword>
<keyword id="KW-0597">Phosphoprotein</keyword>
<keyword id="KW-1267">Proteomics identification</keyword>
<keyword id="KW-1185">Reference proteome</keyword>
<name>DPOA2_HUMAN</name>